<organism>
    <name type="scientific">Scheffersomyces stipitis (strain ATCC 58785 / CBS 6054 / NBRC 10063 / NRRL Y-11545)</name>
    <name type="common">Yeast</name>
    <name type="synonym">Pichia stipitis</name>
    <dbReference type="NCBI Taxonomy" id="322104"/>
    <lineage>
        <taxon>Eukaryota</taxon>
        <taxon>Fungi</taxon>
        <taxon>Dikarya</taxon>
        <taxon>Ascomycota</taxon>
        <taxon>Saccharomycotina</taxon>
        <taxon>Pichiomycetes</taxon>
        <taxon>Debaryomycetaceae</taxon>
        <taxon>Scheffersomyces</taxon>
    </lineage>
</organism>
<keyword id="KW-0539">Nucleus</keyword>
<keyword id="KW-1185">Reference proteome</keyword>
<keyword id="KW-0690">Ribosome biogenesis</keyword>
<keyword id="KW-0694">RNA-binding</keyword>
<keyword id="KW-0698">rRNA processing</keyword>
<accession>A3LVD5</accession>
<proteinExistence type="inferred from homology"/>
<dbReference type="EMBL" id="CP000499">
    <property type="protein sequence ID" value="ABN67100.2"/>
    <property type="molecule type" value="Genomic_DNA"/>
</dbReference>
<dbReference type="RefSeq" id="XP_001385129.2">
    <property type="nucleotide sequence ID" value="XM_001385092.1"/>
</dbReference>
<dbReference type="FunCoup" id="A3LVD5">
    <property type="interactions" value="983"/>
</dbReference>
<dbReference type="STRING" id="322104.A3LVD5"/>
<dbReference type="GeneID" id="4839724"/>
<dbReference type="KEGG" id="pic:PICST_32082"/>
<dbReference type="eggNOG" id="KOG3152">
    <property type="taxonomic scope" value="Eukaryota"/>
</dbReference>
<dbReference type="HOGENOM" id="CLU_054086_0_0_1"/>
<dbReference type="InParanoid" id="A3LVD5"/>
<dbReference type="OMA" id="TRKHNDF"/>
<dbReference type="OrthoDB" id="287393at2759"/>
<dbReference type="Proteomes" id="UP000002258">
    <property type="component" value="Chromosome 5"/>
</dbReference>
<dbReference type="GO" id="GO:0005730">
    <property type="term" value="C:nucleolus"/>
    <property type="evidence" value="ECO:0007669"/>
    <property type="project" value="UniProtKB-SubCell"/>
</dbReference>
<dbReference type="GO" id="GO:0003723">
    <property type="term" value="F:RNA binding"/>
    <property type="evidence" value="ECO:0007669"/>
    <property type="project" value="UniProtKB-KW"/>
</dbReference>
<dbReference type="GO" id="GO:0000480">
    <property type="term" value="P:endonucleolytic cleavage in 5'-ETS of tricistronic rRNA transcript (SSU-rRNA, 5.8S rRNA, LSU-rRNA)"/>
    <property type="evidence" value="ECO:0007669"/>
    <property type="project" value="TreeGrafter"/>
</dbReference>
<dbReference type="GO" id="GO:0000447">
    <property type="term" value="P:endonucleolytic cleavage in ITS1 to separate SSU-rRNA from 5.8S rRNA and LSU-rRNA from tricistronic rRNA transcript (SSU-rRNA, 5.8S rRNA, LSU-rRNA)"/>
    <property type="evidence" value="ECO:0007669"/>
    <property type="project" value="TreeGrafter"/>
</dbReference>
<dbReference type="GO" id="GO:0000472">
    <property type="term" value="P:endonucleolytic cleavage to generate mature 5'-end of SSU-rRNA from (SSU-rRNA, 5.8S rRNA, LSU-rRNA)"/>
    <property type="evidence" value="ECO:0007669"/>
    <property type="project" value="TreeGrafter"/>
</dbReference>
<dbReference type="GO" id="GO:0034462">
    <property type="term" value="P:small-subunit processome assembly"/>
    <property type="evidence" value="ECO:0007669"/>
    <property type="project" value="TreeGrafter"/>
</dbReference>
<dbReference type="CDD" id="cd12263">
    <property type="entry name" value="RRM_ABT1_like"/>
    <property type="match status" value="1"/>
</dbReference>
<dbReference type="Gene3D" id="3.30.70.330">
    <property type="match status" value="1"/>
</dbReference>
<dbReference type="InterPro" id="IPR039119">
    <property type="entry name" value="ABT1/Esf2"/>
</dbReference>
<dbReference type="InterPro" id="IPR034353">
    <property type="entry name" value="ABT1/ESF2_RRM"/>
</dbReference>
<dbReference type="InterPro" id="IPR012677">
    <property type="entry name" value="Nucleotide-bd_a/b_plait_sf"/>
</dbReference>
<dbReference type="InterPro" id="IPR035979">
    <property type="entry name" value="RBD_domain_sf"/>
</dbReference>
<dbReference type="PANTHER" id="PTHR12311">
    <property type="entry name" value="ACTIVATOR OF BASAL TRANSCRIPTION 1"/>
    <property type="match status" value="1"/>
</dbReference>
<dbReference type="PANTHER" id="PTHR12311:SF7">
    <property type="entry name" value="ACTIVATOR OF BASAL TRANSCRIPTION 1"/>
    <property type="match status" value="1"/>
</dbReference>
<dbReference type="SUPFAM" id="SSF54928">
    <property type="entry name" value="RNA-binding domain, RBD"/>
    <property type="match status" value="1"/>
</dbReference>
<reference key="1">
    <citation type="journal article" date="2007" name="Nat. Biotechnol.">
        <title>Genome sequence of the lignocellulose-bioconverting and xylose-fermenting yeast Pichia stipitis.</title>
        <authorList>
            <person name="Jeffries T.W."/>
            <person name="Grigoriev I.V."/>
            <person name="Grimwood J."/>
            <person name="Laplaza J.M."/>
            <person name="Aerts A."/>
            <person name="Salamov A."/>
            <person name="Schmutz J."/>
            <person name="Lindquist E."/>
            <person name="Dehal P."/>
            <person name="Shapiro H."/>
            <person name="Jin Y.-S."/>
            <person name="Passoth V."/>
            <person name="Richardson P.M."/>
        </authorList>
    </citation>
    <scope>NUCLEOTIDE SEQUENCE [LARGE SCALE GENOMIC DNA]</scope>
    <source>
        <strain>ATCC 58785 / CBS 6054 / NBRC 10063 / NRRL Y-11545</strain>
    </source>
</reference>
<sequence>MSKRITKTSAIHDKHSIITRDTESGFEYDSDSESDVENVFPNIRVQRIRDKLYQDEDEDEDEQVDDEDEEDEEDKEDEEDDADNFENENEEEVDDYIDGDGMRNFDMGESIEVGDVDSTSERKNGKIKKLTSRQLQKEQKRIKRTGVCYLSRIPPYMKPATLRSILSRFGKIDRLFLKPEDSAIYHKRVKYGGNKKKNFTEGWVEFVNKKDAKMCASTLNANKLGGRKTSYYYDDVINMKYLSGFKWFDLTQQIAKENEVRQAKLSLELSQQQKLNKTFVNNVEKSKLVSTIQRKRKERDPEHESDSHIRRSFKQRKVTSTRADADEELKARAQPDRKLSDVLSKVF</sequence>
<gene>
    <name type="primary">ESF2</name>
    <name type="ORF">PICST_32082</name>
</gene>
<evidence type="ECO:0000250" key="1"/>
<evidence type="ECO:0000256" key="2">
    <source>
        <dbReference type="SAM" id="MobiDB-lite"/>
    </source>
</evidence>
<evidence type="ECO:0000305" key="3"/>
<name>ESF2_PICST</name>
<comment type="function">
    <text evidence="1">Involved in the small subunit (SSU) processome assembly and function, and in the 18S rRNA synthesis. Required for the early cleavages at sites A0, A1 and A2 (By similarity).</text>
</comment>
<comment type="subcellular location">
    <subcellularLocation>
        <location evidence="1">Nucleus</location>
        <location evidence="1">Nucleolus</location>
    </subcellularLocation>
</comment>
<comment type="similarity">
    <text evidence="3">Belongs to the ESF2/ABP1 family.</text>
</comment>
<feature type="chain" id="PRO_0000285378" description="Pre-rRNA-processing protein ESF2">
    <location>
        <begin position="1"/>
        <end position="347"/>
    </location>
</feature>
<feature type="domain" description="RRM">
    <location>
        <begin position="146"/>
        <end position="236"/>
    </location>
</feature>
<feature type="region of interest" description="Disordered" evidence="2">
    <location>
        <begin position="1"/>
        <end position="101"/>
    </location>
</feature>
<feature type="region of interest" description="Disordered" evidence="2">
    <location>
        <begin position="290"/>
        <end position="347"/>
    </location>
</feature>
<feature type="compositionally biased region" description="Basic and acidic residues" evidence="2">
    <location>
        <begin position="10"/>
        <end position="23"/>
    </location>
</feature>
<feature type="compositionally biased region" description="Acidic residues" evidence="2">
    <location>
        <begin position="24"/>
        <end position="36"/>
    </location>
</feature>
<feature type="compositionally biased region" description="Acidic residues" evidence="2">
    <location>
        <begin position="55"/>
        <end position="98"/>
    </location>
</feature>
<feature type="compositionally biased region" description="Basic and acidic residues" evidence="2">
    <location>
        <begin position="298"/>
        <end position="309"/>
    </location>
</feature>
<feature type="compositionally biased region" description="Basic residues" evidence="2">
    <location>
        <begin position="310"/>
        <end position="319"/>
    </location>
</feature>
<feature type="compositionally biased region" description="Basic and acidic residues" evidence="2">
    <location>
        <begin position="328"/>
        <end position="340"/>
    </location>
</feature>
<protein>
    <recommendedName>
        <fullName>Pre-rRNA-processing protein ESF2</fullName>
    </recommendedName>
    <alternativeName>
        <fullName>18S rRNA factor 2</fullName>
    </alternativeName>
</protein>